<feature type="chain" id="PRO_0000104881" description="Large ribosomal subunit protein uL15">
    <location>
        <begin position="1"/>
        <end position="148"/>
    </location>
</feature>
<feature type="region of interest" description="Disordered" evidence="3">
    <location>
        <begin position="1"/>
        <end position="38"/>
    </location>
</feature>
<feature type="compositionally biased region" description="Basic residues" evidence="3">
    <location>
        <begin position="1"/>
        <end position="30"/>
    </location>
</feature>
<feature type="modified residue" description="(3S)-3-hydroxyhistidine" evidence="2">
    <location>
        <position position="39"/>
    </location>
</feature>
<feature type="modified residue" description="N6-acetyllysine" evidence="2">
    <location>
        <position position="47"/>
    </location>
</feature>
<feature type="modified residue" description="N6-acetyllysine" evidence="2">
    <location>
        <position position="55"/>
    </location>
</feature>
<feature type="modified residue" description="Phosphoserine" evidence="2">
    <location>
        <position position="68"/>
    </location>
</feature>
<feature type="modified residue" description="N6-acetyllysine" evidence="2">
    <location>
        <position position="110"/>
    </location>
</feature>
<protein>
    <recommendedName>
        <fullName evidence="4">Large ribosomal subunit protein uL15</fullName>
    </recommendedName>
    <alternativeName>
        <fullName>60S ribosomal protein L27a</fullName>
    </alternativeName>
</protein>
<organism>
    <name type="scientific">Pan troglodytes</name>
    <name type="common">Chimpanzee</name>
    <dbReference type="NCBI Taxonomy" id="9598"/>
    <lineage>
        <taxon>Eukaryota</taxon>
        <taxon>Metazoa</taxon>
        <taxon>Chordata</taxon>
        <taxon>Craniata</taxon>
        <taxon>Vertebrata</taxon>
        <taxon>Euteleostomi</taxon>
        <taxon>Mammalia</taxon>
        <taxon>Eutheria</taxon>
        <taxon>Euarchontoglires</taxon>
        <taxon>Primates</taxon>
        <taxon>Haplorrhini</taxon>
        <taxon>Catarrhini</taxon>
        <taxon>Hominidae</taxon>
        <taxon>Pan</taxon>
    </lineage>
</organism>
<reference key="1">
    <citation type="submission" date="2004-08" db="EMBL/GenBank/DDBJ databases">
        <authorList>
            <person name="Hirai M."/>
            <person name="Sakate R."/>
            <person name="Hida M."/>
            <person name="Sugano S."/>
            <person name="Hayasaka I."/>
            <person name="Suto Y."/>
            <person name="Osada N."/>
            <person name="Hashimoto K."/>
        </authorList>
    </citation>
    <scope>NUCLEOTIDE SEQUENCE [MRNA]</scope>
    <source>
        <tissue>Brain</tissue>
    </source>
</reference>
<comment type="PTM">
    <text evidence="1">Hydroxylated on His-39 by MINA.</text>
</comment>
<comment type="similarity">
    <text evidence="4">Belongs to the universal ribosomal protein uL15 family.</text>
</comment>
<dbReference type="EMBL" id="AB188277">
    <property type="protein sequence ID" value="BAD74028.1"/>
    <property type="molecule type" value="mRNA"/>
</dbReference>
<dbReference type="RefSeq" id="NP_001029256.1">
    <property type="nucleotide sequence ID" value="NM_001034084.1"/>
</dbReference>
<dbReference type="SMR" id="Q5R1X0"/>
<dbReference type="STRING" id="9598.ENSPTRP00000067010"/>
<dbReference type="PaxDb" id="9598-ENSPTRP00000005825"/>
<dbReference type="GeneID" id="466438"/>
<dbReference type="KEGG" id="ptr:466438"/>
<dbReference type="CTD" id="6157"/>
<dbReference type="eggNOG" id="KOG1742">
    <property type="taxonomic scope" value="Eukaryota"/>
</dbReference>
<dbReference type="InParanoid" id="Q5R1X0"/>
<dbReference type="OrthoDB" id="9062at9604"/>
<dbReference type="Proteomes" id="UP000002277">
    <property type="component" value="Unplaced"/>
</dbReference>
<dbReference type="GO" id="GO:0022625">
    <property type="term" value="C:cytosolic large ribosomal subunit"/>
    <property type="evidence" value="ECO:0000318"/>
    <property type="project" value="GO_Central"/>
</dbReference>
<dbReference type="GO" id="GO:0003735">
    <property type="term" value="F:structural constituent of ribosome"/>
    <property type="evidence" value="ECO:0000318"/>
    <property type="project" value="GO_Central"/>
</dbReference>
<dbReference type="GO" id="GO:0006412">
    <property type="term" value="P:translation"/>
    <property type="evidence" value="ECO:0007669"/>
    <property type="project" value="InterPro"/>
</dbReference>
<dbReference type="FunFam" id="3.100.10.10:FF:000024">
    <property type="entry name" value="RPL27A isoform 10"/>
    <property type="match status" value="1"/>
</dbReference>
<dbReference type="Gene3D" id="3.100.10.10">
    <property type="match status" value="1"/>
</dbReference>
<dbReference type="Gene3D" id="4.10.990.10">
    <property type="match status" value="1"/>
</dbReference>
<dbReference type="HAMAP" id="MF_01341">
    <property type="entry name" value="Ribosomal_uL15"/>
    <property type="match status" value="1"/>
</dbReference>
<dbReference type="InterPro" id="IPR027386">
    <property type="entry name" value="Rbsml_uL15_N"/>
</dbReference>
<dbReference type="InterPro" id="IPR030878">
    <property type="entry name" value="Ribosomal_uL15"/>
</dbReference>
<dbReference type="InterPro" id="IPR021131">
    <property type="entry name" value="Ribosomal_uL15/eL18"/>
</dbReference>
<dbReference type="InterPro" id="IPR036227">
    <property type="entry name" value="Ribosomal_uL15/eL18_sf"/>
</dbReference>
<dbReference type="InterPro" id="IPR001196">
    <property type="entry name" value="Ribosomal_uL15_CS"/>
</dbReference>
<dbReference type="PANTHER" id="PTHR11721">
    <property type="entry name" value="60S RIBOSOMAL PROTEIN L27A"/>
    <property type="match status" value="1"/>
</dbReference>
<dbReference type="PANTHER" id="PTHR11721:SF27">
    <property type="entry name" value="LARGE RIBOSOMAL SUBUNIT PROTEIN UL15"/>
    <property type="match status" value="1"/>
</dbReference>
<dbReference type="Pfam" id="PF00828">
    <property type="entry name" value="Ribosomal_L27A"/>
    <property type="match status" value="1"/>
</dbReference>
<dbReference type="SUPFAM" id="SSF52080">
    <property type="entry name" value="Ribosomal proteins L15p and L18e"/>
    <property type="match status" value="1"/>
</dbReference>
<dbReference type="PROSITE" id="PS00475">
    <property type="entry name" value="RIBOSOMAL_L15"/>
    <property type="match status" value="1"/>
</dbReference>
<sequence>MPSRLRKTRKLRGHVSHGHGRIGKHRKHPGGRGNAGGLHHHRINFDKYHPGYFGKVGMKHYHLKRNQSFCPTVNLDKLWTLVSEQTRVNAAKNKTGAAPIIDVVRSGYYKVLGKGKLPKQPVIVKAKFFSRRAEEKIKSVGGACVLVG</sequence>
<accession>Q5R1X0</accession>
<proteinExistence type="evidence at transcript level"/>
<name>RL27A_PANTR</name>
<keyword id="KW-0007">Acetylation</keyword>
<keyword id="KW-0379">Hydroxylation</keyword>
<keyword id="KW-0597">Phosphoprotein</keyword>
<keyword id="KW-1185">Reference proteome</keyword>
<keyword id="KW-0687">Ribonucleoprotein</keyword>
<keyword id="KW-0689">Ribosomal protein</keyword>
<gene>
    <name type="primary">RPL27A</name>
</gene>
<evidence type="ECO:0000250" key="1"/>
<evidence type="ECO:0000250" key="2">
    <source>
        <dbReference type="UniProtKB" id="P46776"/>
    </source>
</evidence>
<evidence type="ECO:0000256" key="3">
    <source>
        <dbReference type="SAM" id="MobiDB-lite"/>
    </source>
</evidence>
<evidence type="ECO:0000305" key="4"/>